<dbReference type="EC" id="4.4.1.21" evidence="1"/>
<dbReference type="EMBL" id="CP000407">
    <property type="protein sequence ID" value="ABP89387.1"/>
    <property type="status" value="ALT_INIT"/>
    <property type="molecule type" value="Genomic_DNA"/>
</dbReference>
<dbReference type="SMR" id="A4VTE8"/>
<dbReference type="STRING" id="391295.SSU05_0420"/>
<dbReference type="KEGG" id="ssu:SSU05_0420"/>
<dbReference type="eggNOG" id="COG1854">
    <property type="taxonomic scope" value="Bacteria"/>
</dbReference>
<dbReference type="HOGENOM" id="CLU_107531_2_1_9"/>
<dbReference type="BRENDA" id="4.4.1.21">
    <property type="organism ID" value="7186"/>
</dbReference>
<dbReference type="GO" id="GO:0005506">
    <property type="term" value="F:iron ion binding"/>
    <property type="evidence" value="ECO:0007669"/>
    <property type="project" value="InterPro"/>
</dbReference>
<dbReference type="GO" id="GO:0043768">
    <property type="term" value="F:S-ribosylhomocysteine lyase activity"/>
    <property type="evidence" value="ECO:0007669"/>
    <property type="project" value="UniProtKB-UniRule"/>
</dbReference>
<dbReference type="GO" id="GO:0009372">
    <property type="term" value="P:quorum sensing"/>
    <property type="evidence" value="ECO:0007669"/>
    <property type="project" value="UniProtKB-UniRule"/>
</dbReference>
<dbReference type="Gene3D" id="3.30.1360.80">
    <property type="entry name" value="S-ribosylhomocysteinase (LuxS)"/>
    <property type="match status" value="1"/>
</dbReference>
<dbReference type="HAMAP" id="MF_00091">
    <property type="entry name" value="LuxS"/>
    <property type="match status" value="1"/>
</dbReference>
<dbReference type="InterPro" id="IPR037005">
    <property type="entry name" value="LuxS_sf"/>
</dbReference>
<dbReference type="InterPro" id="IPR011249">
    <property type="entry name" value="Metalloenz_LuxS/M16"/>
</dbReference>
<dbReference type="InterPro" id="IPR003815">
    <property type="entry name" value="S-ribosylhomocysteinase"/>
</dbReference>
<dbReference type="NCBIfam" id="NF002607">
    <property type="entry name" value="PRK02260.2-5"/>
    <property type="match status" value="1"/>
</dbReference>
<dbReference type="NCBIfam" id="NF002608">
    <property type="entry name" value="PRK02260.3-1"/>
    <property type="match status" value="1"/>
</dbReference>
<dbReference type="PANTHER" id="PTHR35799">
    <property type="entry name" value="S-RIBOSYLHOMOCYSTEINE LYASE"/>
    <property type="match status" value="1"/>
</dbReference>
<dbReference type="PANTHER" id="PTHR35799:SF1">
    <property type="entry name" value="S-RIBOSYLHOMOCYSTEINE LYASE"/>
    <property type="match status" value="1"/>
</dbReference>
<dbReference type="Pfam" id="PF02664">
    <property type="entry name" value="LuxS"/>
    <property type="match status" value="1"/>
</dbReference>
<dbReference type="PIRSF" id="PIRSF006160">
    <property type="entry name" value="AI2"/>
    <property type="match status" value="1"/>
</dbReference>
<dbReference type="PRINTS" id="PR01487">
    <property type="entry name" value="LUXSPROTEIN"/>
</dbReference>
<dbReference type="SUPFAM" id="SSF63411">
    <property type="entry name" value="LuxS/MPP-like metallohydrolase"/>
    <property type="match status" value="1"/>
</dbReference>
<keyword id="KW-0071">Autoinducer synthesis</keyword>
<keyword id="KW-0408">Iron</keyword>
<keyword id="KW-0456">Lyase</keyword>
<keyword id="KW-0479">Metal-binding</keyword>
<keyword id="KW-0673">Quorum sensing</keyword>
<organism>
    <name type="scientific">Streptococcus suis (strain 05ZYH33)</name>
    <dbReference type="NCBI Taxonomy" id="391295"/>
    <lineage>
        <taxon>Bacteria</taxon>
        <taxon>Bacillati</taxon>
        <taxon>Bacillota</taxon>
        <taxon>Bacilli</taxon>
        <taxon>Lactobacillales</taxon>
        <taxon>Streptococcaceae</taxon>
        <taxon>Streptococcus</taxon>
    </lineage>
</organism>
<gene>
    <name evidence="1" type="primary">luxS</name>
    <name type="ordered locus">SSU05_0420</name>
</gene>
<reference key="1">
    <citation type="journal article" date="2007" name="PLoS ONE">
        <title>A glimpse of streptococcal toxic shock syndrome from comparative genomics of S. suis 2 Chinese isolates.</title>
        <authorList>
            <person name="Chen C."/>
            <person name="Tang J."/>
            <person name="Dong W."/>
            <person name="Wang C."/>
            <person name="Feng Y."/>
            <person name="Wang J."/>
            <person name="Zheng F."/>
            <person name="Pan X."/>
            <person name="Liu D."/>
            <person name="Li M."/>
            <person name="Song Y."/>
            <person name="Zhu X."/>
            <person name="Sun H."/>
            <person name="Feng T."/>
            <person name="Guo Z."/>
            <person name="Ju A."/>
            <person name="Ge J."/>
            <person name="Dong Y."/>
            <person name="Sun W."/>
            <person name="Jiang Y."/>
            <person name="Wang J."/>
            <person name="Yan J."/>
            <person name="Yang H."/>
            <person name="Wang X."/>
            <person name="Gao G.F."/>
            <person name="Yang R."/>
            <person name="Wang J."/>
            <person name="Yu J."/>
        </authorList>
    </citation>
    <scope>NUCLEOTIDE SEQUENCE [LARGE SCALE GENOMIC DNA]</scope>
    <source>
        <strain>05ZYH33</strain>
    </source>
</reference>
<proteinExistence type="inferred from homology"/>
<accession>A4VTE8</accession>
<protein>
    <recommendedName>
        <fullName evidence="1">S-ribosylhomocysteine lyase</fullName>
        <ecNumber evidence="1">4.4.1.21</ecNumber>
    </recommendedName>
    <alternativeName>
        <fullName evidence="1">AI-2 synthesis protein</fullName>
    </alternativeName>
    <alternativeName>
        <fullName evidence="1">Autoinducer-2 production protein LuxS</fullName>
    </alternativeName>
</protein>
<feature type="chain" id="PRO_0000298049" description="S-ribosylhomocysteine lyase">
    <location>
        <begin position="1"/>
        <end position="160"/>
    </location>
</feature>
<feature type="binding site" evidence="1">
    <location>
        <position position="57"/>
    </location>
    <ligand>
        <name>Fe cation</name>
        <dbReference type="ChEBI" id="CHEBI:24875"/>
    </ligand>
</feature>
<feature type="binding site" evidence="1">
    <location>
        <position position="61"/>
    </location>
    <ligand>
        <name>Fe cation</name>
        <dbReference type="ChEBI" id="CHEBI:24875"/>
    </ligand>
</feature>
<feature type="binding site" evidence="1">
    <location>
        <position position="127"/>
    </location>
    <ligand>
        <name>Fe cation</name>
        <dbReference type="ChEBI" id="CHEBI:24875"/>
    </ligand>
</feature>
<evidence type="ECO:0000255" key="1">
    <source>
        <dbReference type="HAMAP-Rule" id="MF_00091"/>
    </source>
</evidence>
<evidence type="ECO:0000305" key="2"/>
<name>LUXS_STRSY</name>
<comment type="function">
    <text evidence="1">Involved in the synthesis of autoinducer 2 (AI-2) which is secreted by bacteria and is used to communicate both the cell density and the metabolic potential of the environment. The regulation of gene expression in response to changes in cell density is called quorum sensing. Catalyzes the transformation of S-ribosylhomocysteine (RHC) to homocysteine (HC) and 4,5-dihydroxy-2,3-pentadione (DPD).</text>
</comment>
<comment type="catalytic activity">
    <reaction evidence="1">
        <text>S-(5-deoxy-D-ribos-5-yl)-L-homocysteine = (S)-4,5-dihydroxypentane-2,3-dione + L-homocysteine</text>
        <dbReference type="Rhea" id="RHEA:17753"/>
        <dbReference type="ChEBI" id="CHEBI:29484"/>
        <dbReference type="ChEBI" id="CHEBI:58195"/>
        <dbReference type="ChEBI" id="CHEBI:58199"/>
        <dbReference type="EC" id="4.4.1.21"/>
    </reaction>
</comment>
<comment type="cofactor">
    <cofactor evidence="1">
        <name>Fe cation</name>
        <dbReference type="ChEBI" id="CHEBI:24875"/>
    </cofactor>
    <text evidence="1">Binds 1 Fe cation per subunit.</text>
</comment>
<comment type="subunit">
    <text evidence="1">Homodimer.</text>
</comment>
<comment type="similarity">
    <text evidence="1">Belongs to the LuxS family.</text>
</comment>
<comment type="sequence caution" evidence="2">
    <conflict type="erroneous initiation">
        <sequence resource="EMBL-CDS" id="ABP89387"/>
    </conflict>
</comment>
<sequence>MKKEVTVESFELDHTIVKAPYIRLISEEVGPKGDIITNFDIRLIQPNENAMDTAGLHTIEHLLAKLIRQRIDGLIDCSPFGCRTGFHMIMWGKQDSEKIAQVIKSSLEEIAEGITWEDVPGTTIESCGNYKDHSLHSAKEWAKLILSQGISTDAFERKPI</sequence>